<organism>
    <name type="scientific">Chlamydia trachomatis serovar L2 (strain ATCC VR-902B / DSM 19102 / 434/Bu)</name>
    <dbReference type="NCBI Taxonomy" id="471472"/>
    <lineage>
        <taxon>Bacteria</taxon>
        <taxon>Pseudomonadati</taxon>
        <taxon>Chlamydiota</taxon>
        <taxon>Chlamydiia</taxon>
        <taxon>Chlamydiales</taxon>
        <taxon>Chlamydiaceae</taxon>
        <taxon>Chlamydia/Chlamydophila group</taxon>
        <taxon>Chlamydia</taxon>
    </lineage>
</organism>
<name>RS14_CHLT2</name>
<keyword id="KW-0687">Ribonucleoprotein</keyword>
<keyword id="KW-0689">Ribosomal protein</keyword>
<keyword id="KW-0694">RNA-binding</keyword>
<keyword id="KW-0699">rRNA-binding</keyword>
<sequence length="101" mass="11716">MAKKSAVAREVKRRKLVEANFQKRAELRKLAKSLSVSEEERERAREALNKMRRDTSPSRLHNRCLLTGRPRGYLRKFAISRICFRQMASMGDIPGVVKASW</sequence>
<accession>B0B913</accession>
<proteinExistence type="inferred from homology"/>
<comment type="function">
    <text evidence="1">Binds 16S rRNA, required for the assembly of 30S particles and may also be responsible for determining the conformation of the 16S rRNA at the A site.</text>
</comment>
<comment type="subunit">
    <text evidence="1">Part of the 30S ribosomal subunit. Contacts proteins S3 and S10.</text>
</comment>
<comment type="similarity">
    <text evidence="1">Belongs to the universal ribosomal protein uS14 family.</text>
</comment>
<protein>
    <recommendedName>
        <fullName evidence="1">Small ribosomal subunit protein uS14</fullName>
    </recommendedName>
    <alternativeName>
        <fullName evidence="2">30S ribosomal protein S14</fullName>
    </alternativeName>
</protein>
<dbReference type="EMBL" id="AM884176">
    <property type="protein sequence ID" value="CAP03600.1"/>
    <property type="molecule type" value="Genomic_DNA"/>
</dbReference>
<dbReference type="RefSeq" id="WP_009872167.1">
    <property type="nucleotide sequence ID" value="NC_010287.1"/>
</dbReference>
<dbReference type="RefSeq" id="YP_001654247.1">
    <property type="nucleotide sequence ID" value="NC_010287.1"/>
</dbReference>
<dbReference type="SMR" id="B0B913"/>
<dbReference type="KEGG" id="ctb:CTL0155"/>
<dbReference type="PATRIC" id="fig|471472.4.peg.169"/>
<dbReference type="HOGENOM" id="CLU_139869_0_1_0"/>
<dbReference type="Proteomes" id="UP001154402">
    <property type="component" value="Chromosome"/>
</dbReference>
<dbReference type="GO" id="GO:0005737">
    <property type="term" value="C:cytoplasm"/>
    <property type="evidence" value="ECO:0007669"/>
    <property type="project" value="UniProtKB-ARBA"/>
</dbReference>
<dbReference type="GO" id="GO:0015935">
    <property type="term" value="C:small ribosomal subunit"/>
    <property type="evidence" value="ECO:0007669"/>
    <property type="project" value="TreeGrafter"/>
</dbReference>
<dbReference type="GO" id="GO:0019843">
    <property type="term" value="F:rRNA binding"/>
    <property type="evidence" value="ECO:0007669"/>
    <property type="project" value="UniProtKB-UniRule"/>
</dbReference>
<dbReference type="GO" id="GO:0003735">
    <property type="term" value="F:structural constituent of ribosome"/>
    <property type="evidence" value="ECO:0007669"/>
    <property type="project" value="InterPro"/>
</dbReference>
<dbReference type="GO" id="GO:0006412">
    <property type="term" value="P:translation"/>
    <property type="evidence" value="ECO:0007669"/>
    <property type="project" value="UniProtKB-UniRule"/>
</dbReference>
<dbReference type="FunFam" id="1.10.287.1480:FF:000001">
    <property type="entry name" value="30S ribosomal protein S14"/>
    <property type="match status" value="1"/>
</dbReference>
<dbReference type="Gene3D" id="1.10.287.1480">
    <property type="match status" value="1"/>
</dbReference>
<dbReference type="HAMAP" id="MF_00537">
    <property type="entry name" value="Ribosomal_uS14_1"/>
    <property type="match status" value="1"/>
</dbReference>
<dbReference type="InterPro" id="IPR001209">
    <property type="entry name" value="Ribosomal_uS14"/>
</dbReference>
<dbReference type="InterPro" id="IPR023036">
    <property type="entry name" value="Ribosomal_uS14_bac/plastid"/>
</dbReference>
<dbReference type="InterPro" id="IPR018271">
    <property type="entry name" value="Ribosomal_uS14_CS"/>
</dbReference>
<dbReference type="NCBIfam" id="NF006477">
    <property type="entry name" value="PRK08881.1"/>
    <property type="match status" value="1"/>
</dbReference>
<dbReference type="PANTHER" id="PTHR19836">
    <property type="entry name" value="30S RIBOSOMAL PROTEIN S14"/>
    <property type="match status" value="1"/>
</dbReference>
<dbReference type="PANTHER" id="PTHR19836:SF19">
    <property type="entry name" value="SMALL RIBOSOMAL SUBUNIT PROTEIN US14M"/>
    <property type="match status" value="1"/>
</dbReference>
<dbReference type="Pfam" id="PF00253">
    <property type="entry name" value="Ribosomal_S14"/>
    <property type="match status" value="1"/>
</dbReference>
<dbReference type="SUPFAM" id="SSF57716">
    <property type="entry name" value="Glucocorticoid receptor-like (DNA-binding domain)"/>
    <property type="match status" value="1"/>
</dbReference>
<dbReference type="PROSITE" id="PS00527">
    <property type="entry name" value="RIBOSOMAL_S14"/>
    <property type="match status" value="1"/>
</dbReference>
<gene>
    <name evidence="1" type="primary">rpsN</name>
    <name type="ordered locus">CTL0155</name>
</gene>
<feature type="chain" id="PRO_1000128357" description="Small ribosomal subunit protein uS14">
    <location>
        <begin position="1"/>
        <end position="101"/>
    </location>
</feature>
<evidence type="ECO:0000255" key="1">
    <source>
        <dbReference type="HAMAP-Rule" id="MF_00537"/>
    </source>
</evidence>
<evidence type="ECO:0000305" key="2"/>
<reference key="1">
    <citation type="journal article" date="2008" name="Genome Res.">
        <title>Chlamydia trachomatis: genome sequence analysis of lymphogranuloma venereum isolates.</title>
        <authorList>
            <person name="Thomson N.R."/>
            <person name="Holden M.T.G."/>
            <person name="Carder C."/>
            <person name="Lennard N."/>
            <person name="Lockey S.J."/>
            <person name="Marsh P."/>
            <person name="Skipp P."/>
            <person name="O'Connor C.D."/>
            <person name="Goodhead I."/>
            <person name="Norbertzcak H."/>
            <person name="Harris B."/>
            <person name="Ormond D."/>
            <person name="Rance R."/>
            <person name="Quail M.A."/>
            <person name="Parkhill J."/>
            <person name="Stephens R.S."/>
            <person name="Clarke I.N."/>
        </authorList>
    </citation>
    <scope>NUCLEOTIDE SEQUENCE [LARGE SCALE GENOMIC DNA]</scope>
    <source>
        <strain>ATCC VR-902B / DSM 19102 / 434/Bu</strain>
    </source>
</reference>